<proteinExistence type="evidence at protein level"/>
<reference key="1">
    <citation type="journal article" date="2005" name="Nature">
        <title>Generation and annotation of the DNA sequences of human chromosomes 2 and 4.</title>
        <authorList>
            <person name="Hillier L.W."/>
            <person name="Graves T.A."/>
            <person name="Fulton R.S."/>
            <person name="Fulton L.A."/>
            <person name="Pepin K.H."/>
            <person name="Minx P."/>
            <person name="Wagner-McPherson C."/>
            <person name="Layman D."/>
            <person name="Wylie K."/>
            <person name="Sekhon M."/>
            <person name="Becker M.C."/>
            <person name="Fewell G.A."/>
            <person name="Delehaunty K.D."/>
            <person name="Miner T.L."/>
            <person name="Nash W.E."/>
            <person name="Kremitzki C."/>
            <person name="Oddy L."/>
            <person name="Du H."/>
            <person name="Sun H."/>
            <person name="Bradshaw-Cordum H."/>
            <person name="Ali J."/>
            <person name="Carter J."/>
            <person name="Cordes M."/>
            <person name="Harris A."/>
            <person name="Isak A."/>
            <person name="van Brunt A."/>
            <person name="Nguyen C."/>
            <person name="Du F."/>
            <person name="Courtney L."/>
            <person name="Kalicki J."/>
            <person name="Ozersky P."/>
            <person name="Abbott S."/>
            <person name="Armstrong J."/>
            <person name="Belter E.A."/>
            <person name="Caruso L."/>
            <person name="Cedroni M."/>
            <person name="Cotton M."/>
            <person name="Davidson T."/>
            <person name="Desai A."/>
            <person name="Elliott G."/>
            <person name="Erb T."/>
            <person name="Fronick C."/>
            <person name="Gaige T."/>
            <person name="Haakenson W."/>
            <person name="Haglund K."/>
            <person name="Holmes A."/>
            <person name="Harkins R."/>
            <person name="Kim K."/>
            <person name="Kruchowski S.S."/>
            <person name="Strong C.M."/>
            <person name="Grewal N."/>
            <person name="Goyea E."/>
            <person name="Hou S."/>
            <person name="Levy A."/>
            <person name="Martinka S."/>
            <person name="Mead K."/>
            <person name="McLellan M.D."/>
            <person name="Meyer R."/>
            <person name="Randall-Maher J."/>
            <person name="Tomlinson C."/>
            <person name="Dauphin-Kohlberg S."/>
            <person name="Kozlowicz-Reilly A."/>
            <person name="Shah N."/>
            <person name="Swearengen-Shahid S."/>
            <person name="Snider J."/>
            <person name="Strong J.T."/>
            <person name="Thompson J."/>
            <person name="Yoakum M."/>
            <person name="Leonard S."/>
            <person name="Pearman C."/>
            <person name="Trani L."/>
            <person name="Radionenko M."/>
            <person name="Waligorski J.E."/>
            <person name="Wang C."/>
            <person name="Rock S.M."/>
            <person name="Tin-Wollam A.-M."/>
            <person name="Maupin R."/>
            <person name="Latreille P."/>
            <person name="Wendl M.C."/>
            <person name="Yang S.-P."/>
            <person name="Pohl C."/>
            <person name="Wallis J.W."/>
            <person name="Spieth J."/>
            <person name="Bieri T.A."/>
            <person name="Berkowicz N."/>
            <person name="Nelson J.O."/>
            <person name="Osborne J."/>
            <person name="Ding L."/>
            <person name="Meyer R."/>
            <person name="Sabo A."/>
            <person name="Shotland Y."/>
            <person name="Sinha P."/>
            <person name="Wohldmann P.E."/>
            <person name="Cook L.L."/>
            <person name="Hickenbotham M.T."/>
            <person name="Eldred J."/>
            <person name="Williams D."/>
            <person name="Jones T.A."/>
            <person name="She X."/>
            <person name="Ciccarelli F.D."/>
            <person name="Izaurralde E."/>
            <person name="Taylor J."/>
            <person name="Schmutz J."/>
            <person name="Myers R.M."/>
            <person name="Cox D.R."/>
            <person name="Huang X."/>
            <person name="McPherson J.D."/>
            <person name="Mardis E.R."/>
            <person name="Clifton S.W."/>
            <person name="Warren W.C."/>
            <person name="Chinwalla A.T."/>
            <person name="Eddy S.R."/>
            <person name="Marra M.A."/>
            <person name="Ovcharenko I."/>
            <person name="Furey T.S."/>
            <person name="Miller W."/>
            <person name="Eichler E.E."/>
            <person name="Bork P."/>
            <person name="Suyama M."/>
            <person name="Torrents D."/>
            <person name="Waterston R.H."/>
            <person name="Wilson R.K."/>
        </authorList>
    </citation>
    <scope>NUCLEOTIDE SEQUENCE [LARGE SCALE GENOMIC DNA] (IMGT ALLELE IGKV3D-7*01)</scope>
</reference>
<reference key="2">
    <citation type="journal article" date="2001" name="Exp. Clin. Immunogenet.">
        <title>Nomenclature of the human immunoglobulin kappa (IGK) genes.</title>
        <authorList>
            <person name="Lefranc M.P."/>
        </authorList>
    </citation>
    <scope>NOMEMCLATURE</scope>
</reference>
<reference key="3">
    <citation type="book" date="2001" name="The Immunoglobulin FactsBook.">
        <title>The Immunoglobulin FactsBook.</title>
        <editorList>
            <person name="Lefranc M.P."/>
            <person name="Lefranc G."/>
        </editorList>
        <authorList>
            <person name="Lefranc M.P."/>
            <person name="Lefranc G."/>
        </authorList>
    </citation>
    <scope>NOMENCLATURE</scope>
</reference>
<reference key="4">
    <citation type="journal article" date="2007" name="Annu. Rev. Genet.">
        <title>Immunoglobulin somatic hypermutation.</title>
        <authorList>
            <person name="Teng G."/>
            <person name="Papavasiliou F.N."/>
        </authorList>
    </citation>
    <scope>REVIEW ON SOMATIC HYPERMUTATION</scope>
</reference>
<reference key="5">
    <citation type="journal article" date="2010" name="J. Allergy Clin. Immunol.">
        <title>Structure and function of immunoglobulins.</title>
        <authorList>
            <person name="Schroeder H.W. Jr."/>
            <person name="Cavacini L."/>
        </authorList>
    </citation>
    <scope>REVIEW ON IMMUNOGLOBULINS</scope>
</reference>
<reference key="6">
    <citation type="journal article" date="2012" name="Nat. Rev. Immunol.">
        <title>Molecular programming of B cell memory.</title>
        <authorList>
            <person name="McHeyzer-Williams M."/>
            <person name="Okitsu S."/>
            <person name="Wang N."/>
            <person name="McHeyzer-Williams L."/>
        </authorList>
    </citation>
    <scope>REVIEW ON FUNCTION</scope>
</reference>
<reference key="7">
    <citation type="journal article" date="2014" name="Front. Immunol.">
        <title>Immunoglobulin and T Cell Receptor Genes: IMGT((R)) and the Birth and Rise of Immunoinformatics.</title>
        <authorList>
            <person name="Lefranc M.P."/>
        </authorList>
    </citation>
    <scope>NOMENCLATURE</scope>
</reference>
<gene>
    <name evidence="4 9" type="primary">IGKV3D-7</name>
</gene>
<feature type="signal peptide" evidence="2">
    <location>
        <begin position="1"/>
        <end position="23"/>
    </location>
</feature>
<feature type="chain" id="PRO_5008205601" description="Immunoglobulin kappa variable 3D-7" evidence="2">
    <location>
        <begin position="24"/>
        <end position="119"/>
    </location>
</feature>
<feature type="domain" description="Ig-like" evidence="3">
    <location>
        <begin position="24"/>
        <end position="119" status="greater than"/>
    </location>
</feature>
<feature type="region of interest" description="Framework-1" evidence="1">
    <location>
        <begin position="24"/>
        <end position="46"/>
    </location>
</feature>
<feature type="region of interest" description="Complementarity-determining-1" evidence="1">
    <location>
        <begin position="47"/>
        <end position="58"/>
    </location>
</feature>
<feature type="region of interest" description="Framework-2" evidence="1">
    <location>
        <begin position="59"/>
        <end position="73"/>
    </location>
</feature>
<feature type="region of interest" description="Complementarity-determining-2" evidence="1">
    <location>
        <begin position="74"/>
        <end position="80"/>
    </location>
</feature>
<feature type="region of interest" description="Framework-3" evidence="1">
    <location>
        <begin position="81"/>
        <end position="112"/>
    </location>
</feature>
<feature type="region of interest" description="Complementarity-determining-3" evidence="1">
    <location>
        <begin position="113"/>
        <end position="119" status="greater than"/>
    </location>
</feature>
<feature type="disulfide bond" evidence="3">
    <location>
        <begin position="46"/>
        <end position="112"/>
    </location>
</feature>
<feature type="non-terminal residue">
    <location>
        <position position="119"/>
    </location>
</feature>
<name>KVD07_HUMAN</name>
<comment type="function">
    <text evidence="5 6 7 8">V region of the variable domain of immunoglobulin light chains that participates in the antigen recognition (PubMed:24600447). Immunoglobulins, also known as antibodies, are membrane-bound or secreted glycoproteins produced by B lymphocytes. In the recognition phase of humoral immunity, the membrane-bound immunoglobulins serve as receptors which, upon binding of a specific antigen, trigger the clonal expansion and differentiation of B lymphocytes into immunoglobulins-secreting plasma cells. Secreted immunoglobulins mediate the effector phase of humoral immunity, which results in the elimination of bound antigens (PubMed:20176268, PubMed:22158414). The antigen binding site is formed by the variable domain of one heavy chain, together with that of its associated light chain. Thus, each immunoglobulin has two antigen binding sites with remarkable affinity for a particular antigen. The variable domains are assembled by a process called V-(D)-J rearrangement and can then be subjected to somatic hypermutations which, after exposure to antigen and selection, allow affinity maturation for a particular antigen (PubMed:17576170, PubMed:20176268).</text>
</comment>
<comment type="subunit">
    <text evidence="6">Immunoglobulins are composed of two identical heavy chains and two identical light chains; disulfide-linked.</text>
</comment>
<comment type="subcellular location">
    <subcellularLocation>
        <location evidence="6 7">Secreted</location>
    </subcellularLocation>
    <subcellularLocation>
        <location evidence="6 7">Cell membrane</location>
    </subcellularLocation>
</comment>
<comment type="polymorphism">
    <text>There are several alleles. The sequence shown is that of IMGT allele IGKV3D-7*01.</text>
</comment>
<comment type="caution">
    <text evidence="10">For an example of a full-length immunoglobulin kappa light chain see AC P0DOX7.</text>
</comment>
<organism>
    <name type="scientific">Homo sapiens</name>
    <name type="common">Human</name>
    <dbReference type="NCBI Taxonomy" id="9606"/>
    <lineage>
        <taxon>Eukaryota</taxon>
        <taxon>Metazoa</taxon>
        <taxon>Chordata</taxon>
        <taxon>Craniata</taxon>
        <taxon>Vertebrata</taxon>
        <taxon>Euteleostomi</taxon>
        <taxon>Mammalia</taxon>
        <taxon>Eutheria</taxon>
        <taxon>Euarchontoglires</taxon>
        <taxon>Primates</taxon>
        <taxon>Haplorrhini</taxon>
        <taxon>Catarrhini</taxon>
        <taxon>Hominidae</taxon>
        <taxon>Homo</taxon>
    </lineage>
</organism>
<evidence type="ECO:0000250" key="1">
    <source>
        <dbReference type="UniProtKB" id="P01602"/>
    </source>
</evidence>
<evidence type="ECO:0000255" key="2"/>
<evidence type="ECO:0000255" key="3">
    <source>
        <dbReference type="PROSITE-ProRule" id="PRU00114"/>
    </source>
</evidence>
<evidence type="ECO:0000303" key="4">
    <source>
    </source>
</evidence>
<evidence type="ECO:0000303" key="5">
    <source>
    </source>
</evidence>
<evidence type="ECO:0000303" key="6">
    <source>
    </source>
</evidence>
<evidence type="ECO:0000303" key="7">
    <source>
    </source>
</evidence>
<evidence type="ECO:0000303" key="8">
    <source>
    </source>
</evidence>
<evidence type="ECO:0000303" key="9">
    <source ref="3"/>
</evidence>
<evidence type="ECO:0000305" key="10"/>
<keyword id="KW-1064">Adaptive immunity</keyword>
<keyword id="KW-1003">Cell membrane</keyword>
<keyword id="KW-1015">Disulfide bond</keyword>
<keyword id="KW-0391">Immunity</keyword>
<keyword id="KW-1280">Immunoglobulin</keyword>
<keyword id="KW-0393">Immunoglobulin domain</keyword>
<keyword id="KW-0472">Membrane</keyword>
<keyword id="KW-1267">Proteomics identification</keyword>
<keyword id="KW-1185">Reference proteome</keyword>
<keyword id="KW-0964">Secreted</keyword>
<keyword id="KW-0732">Signal</keyword>
<protein>
    <recommendedName>
        <fullName evidence="4 9">Immunoglobulin kappa variable 3D-7</fullName>
    </recommendedName>
</protein>
<dbReference type="EMBL" id="AC145029">
    <property type="status" value="NOT_ANNOTATED_CDS"/>
    <property type="molecule type" value="Genomic_DNA"/>
</dbReference>
<dbReference type="EMBL" id="AC247037">
    <property type="status" value="NOT_ANNOTATED_CDS"/>
    <property type="molecule type" value="Genomic_DNA"/>
</dbReference>
<dbReference type="SMR" id="A0A0C4DH55"/>
<dbReference type="FunCoup" id="A0A0C4DH55">
    <property type="interactions" value="274"/>
</dbReference>
<dbReference type="IMGT_GENE-DB" id="IGKV3D-7"/>
<dbReference type="BioMuta" id="IGKV3D-7"/>
<dbReference type="jPOST" id="A0A0C4DH55"/>
<dbReference type="MassIVE" id="A0A0C4DH55"/>
<dbReference type="Ensembl" id="ENST00000443397.5">
    <property type="protein sequence ID" value="ENSP00000402914.5"/>
    <property type="gene ID" value="ENSG00000228325.5"/>
</dbReference>
<dbReference type="Ensembl" id="ENST00000627132.1">
    <property type="protein sequence ID" value="ENSP00000487088.1"/>
    <property type="gene ID" value="ENSG00000275777.3"/>
</dbReference>
<dbReference type="AGR" id="HGNC:5829"/>
<dbReference type="GeneCards" id="IGKV3D-7"/>
<dbReference type="HGNC" id="HGNC:5829">
    <property type="gene designation" value="IGKV3D-7"/>
</dbReference>
<dbReference type="HPA" id="ENSG00000228325">
    <property type="expression patterns" value="Tissue enhanced (intestine, lymphoid tissue, stomach, urinary bladder)"/>
</dbReference>
<dbReference type="neXtProt" id="NX_A0A0C4DH55"/>
<dbReference type="VEuPathDB" id="HostDB:ENSG00000228325"/>
<dbReference type="GeneTree" id="ENSGT00940000154413"/>
<dbReference type="HOGENOM" id="CLU_077975_4_1_1"/>
<dbReference type="InParanoid" id="A0A0C4DH55"/>
<dbReference type="OMA" id="YYCQKYS"/>
<dbReference type="OrthoDB" id="8908372at2759"/>
<dbReference type="PAN-GO" id="A0A0C4DH55">
    <property type="GO annotations" value="3 GO annotations based on evolutionary models"/>
</dbReference>
<dbReference type="PhylomeDB" id="A0A0C4DH55"/>
<dbReference type="ChiTaRS" id="IGKV3D-7">
    <property type="organism name" value="human"/>
</dbReference>
<dbReference type="Pharos" id="A0A0C4DH55">
    <property type="development level" value="Tdark"/>
</dbReference>
<dbReference type="PRO" id="PR:A0A0C4DH55"/>
<dbReference type="Proteomes" id="UP000005640">
    <property type="component" value="Chromosome 2"/>
</dbReference>
<dbReference type="RNAct" id="A0A0C4DH55">
    <property type="molecule type" value="protein"/>
</dbReference>
<dbReference type="Bgee" id="ENSG00000228325">
    <property type="expression patterns" value="Expressed in vermiform appendix and 81 other cell types or tissues"/>
</dbReference>
<dbReference type="GO" id="GO:0005576">
    <property type="term" value="C:extracellular region"/>
    <property type="evidence" value="ECO:0007669"/>
    <property type="project" value="UniProtKB-SubCell"/>
</dbReference>
<dbReference type="GO" id="GO:0019814">
    <property type="term" value="C:immunoglobulin complex"/>
    <property type="evidence" value="ECO:0000318"/>
    <property type="project" value="GO_Central"/>
</dbReference>
<dbReference type="GO" id="GO:0005886">
    <property type="term" value="C:plasma membrane"/>
    <property type="evidence" value="ECO:0007669"/>
    <property type="project" value="UniProtKB-SubCell"/>
</dbReference>
<dbReference type="GO" id="GO:0002250">
    <property type="term" value="P:adaptive immune response"/>
    <property type="evidence" value="ECO:0007669"/>
    <property type="project" value="UniProtKB-KW"/>
</dbReference>
<dbReference type="GO" id="GO:0006955">
    <property type="term" value="P:immune response"/>
    <property type="evidence" value="ECO:0000318"/>
    <property type="project" value="GO_Central"/>
</dbReference>
<dbReference type="FunFam" id="2.60.40.10:FF:000350">
    <property type="entry name" value="Immunoglobulin kappa chain variable 18-36"/>
    <property type="match status" value="1"/>
</dbReference>
<dbReference type="Gene3D" id="2.60.40.10">
    <property type="entry name" value="Immunoglobulins"/>
    <property type="match status" value="1"/>
</dbReference>
<dbReference type="InterPro" id="IPR007110">
    <property type="entry name" value="Ig-like_dom"/>
</dbReference>
<dbReference type="InterPro" id="IPR036179">
    <property type="entry name" value="Ig-like_dom_sf"/>
</dbReference>
<dbReference type="InterPro" id="IPR013783">
    <property type="entry name" value="Ig-like_fold"/>
</dbReference>
<dbReference type="InterPro" id="IPR003599">
    <property type="entry name" value="Ig_sub"/>
</dbReference>
<dbReference type="InterPro" id="IPR013106">
    <property type="entry name" value="Ig_V-set"/>
</dbReference>
<dbReference type="InterPro" id="IPR050150">
    <property type="entry name" value="IgV_Light_Chain"/>
</dbReference>
<dbReference type="PANTHER" id="PTHR23267">
    <property type="entry name" value="IMMUNOGLOBULIN LIGHT CHAIN"/>
    <property type="match status" value="1"/>
</dbReference>
<dbReference type="Pfam" id="PF07686">
    <property type="entry name" value="V-set"/>
    <property type="match status" value="1"/>
</dbReference>
<dbReference type="SMART" id="SM00409">
    <property type="entry name" value="IG"/>
    <property type="match status" value="1"/>
</dbReference>
<dbReference type="SMART" id="SM00406">
    <property type="entry name" value="IGv"/>
    <property type="match status" value="1"/>
</dbReference>
<dbReference type="SUPFAM" id="SSF48726">
    <property type="entry name" value="Immunoglobulin"/>
    <property type="match status" value="1"/>
</dbReference>
<dbReference type="PROSITE" id="PS50835">
    <property type="entry name" value="IG_LIKE"/>
    <property type="match status" value="1"/>
</dbReference>
<accession>A0A0C4DH55</accession>
<sequence>MEPWKPQHSFFFLLLLWLPDTTGEIVMTQSPATLSLSPGERATLSCRASQSVSSSYLSWYQQKPGQAPRLLIYGASTRATGIPARFSGSGSGTDFTLTISSLQPEDFAVYYCQQDYNLP</sequence>